<sequence>MLPTAQRRLRGYIRACAPYGRRGEEPVRRRCAFLCARVGHVCVGRSVVQNFVFQDNIYHLARSIDVLYEGLQLNLDECLYAEKVVYDVRFFDHALQKLCAHIDRQSHFPDYLPILHCLFSCGARFLNLLNFLIHRASPVTAQVEFTRMLPFIEKRHSALHENLARSIQEVDTSADASHVVSQDEIDELLEH</sequence>
<feature type="chain" id="PRO_0000202183" description="Uncharacterized protein TP_0064">
    <location>
        <begin position="1"/>
        <end position="191"/>
    </location>
</feature>
<reference key="1">
    <citation type="journal article" date="1998" name="Science">
        <title>Complete genome sequence of Treponema pallidum, the syphilis spirochete.</title>
        <authorList>
            <person name="Fraser C.M."/>
            <person name="Norris S.J."/>
            <person name="Weinstock G.M."/>
            <person name="White O."/>
            <person name="Sutton G.G."/>
            <person name="Dodson R.J."/>
            <person name="Gwinn M.L."/>
            <person name="Hickey E.K."/>
            <person name="Clayton R.A."/>
            <person name="Ketchum K.A."/>
            <person name="Sodergren E."/>
            <person name="Hardham J.M."/>
            <person name="McLeod M.P."/>
            <person name="Salzberg S.L."/>
            <person name="Peterson J.D."/>
            <person name="Khalak H.G."/>
            <person name="Richardson D.L."/>
            <person name="Howell J.K."/>
            <person name="Chidambaram M."/>
            <person name="Utterback T.R."/>
            <person name="McDonald L.A."/>
            <person name="Artiach P."/>
            <person name="Bowman C."/>
            <person name="Cotton M.D."/>
            <person name="Fujii C."/>
            <person name="Garland S.A."/>
            <person name="Hatch B."/>
            <person name="Horst K."/>
            <person name="Roberts K.M."/>
            <person name="Sandusky M."/>
            <person name="Weidman J.F."/>
            <person name="Smith H.O."/>
            <person name="Venter J.C."/>
        </authorList>
    </citation>
    <scope>NUCLEOTIDE SEQUENCE [LARGE SCALE GENOMIC DNA]</scope>
    <source>
        <strain>Nichols</strain>
    </source>
</reference>
<accession>O83103</accession>
<dbReference type="EMBL" id="AE000520">
    <property type="protein sequence ID" value="AAC65064.1"/>
    <property type="molecule type" value="Genomic_DNA"/>
</dbReference>
<dbReference type="PIR" id="H71370">
    <property type="entry name" value="H71370"/>
</dbReference>
<dbReference type="RefSeq" id="WP_010881513.1">
    <property type="nucleotide sequence ID" value="NC_021490.2"/>
</dbReference>
<dbReference type="SMR" id="O83103"/>
<dbReference type="IntAct" id="O83103">
    <property type="interactions" value="11"/>
</dbReference>
<dbReference type="STRING" id="243276.TP_0064"/>
<dbReference type="EnsemblBacteria" id="AAC65064">
    <property type="protein sequence ID" value="AAC65064"/>
    <property type="gene ID" value="TP_0064"/>
</dbReference>
<dbReference type="KEGG" id="tpa:TP_0064"/>
<dbReference type="KEGG" id="tpw:TPANIC_0064"/>
<dbReference type="eggNOG" id="ENOG502ZM16">
    <property type="taxonomic scope" value="Bacteria"/>
</dbReference>
<dbReference type="HOGENOM" id="CLU_122425_0_0_12"/>
<dbReference type="OrthoDB" id="371174at2"/>
<dbReference type="Proteomes" id="UP000000811">
    <property type="component" value="Chromosome"/>
</dbReference>
<keyword id="KW-1185">Reference proteome</keyword>
<gene>
    <name type="ordered locus">TP_0064</name>
</gene>
<organism>
    <name type="scientific">Treponema pallidum (strain Nichols)</name>
    <dbReference type="NCBI Taxonomy" id="243276"/>
    <lineage>
        <taxon>Bacteria</taxon>
        <taxon>Pseudomonadati</taxon>
        <taxon>Spirochaetota</taxon>
        <taxon>Spirochaetia</taxon>
        <taxon>Spirochaetales</taxon>
        <taxon>Treponemataceae</taxon>
        <taxon>Treponema</taxon>
    </lineage>
</organism>
<name>Y064_TREPA</name>
<proteinExistence type="predicted"/>
<protein>
    <recommendedName>
        <fullName>Uncharacterized protein TP_0064</fullName>
    </recommendedName>
</protein>